<reference key="1">
    <citation type="journal article" date="1998" name="Science">
        <title>Genome sequence of the nematode C. elegans: a platform for investigating biology.</title>
        <authorList>
            <consortium name="The C. elegans sequencing consortium"/>
        </authorList>
    </citation>
    <scope>NUCLEOTIDE SEQUENCE [LARGE SCALE GENOMIC DNA]</scope>
    <source>
        <strain>Bristol N2</strain>
    </source>
</reference>
<reference key="2">
    <citation type="journal article" date="2013" name="Autophagy">
        <title>The two C. elegans ATG-16 homologs have partially redundant functions in the basal autophagy pathway.</title>
        <authorList>
            <person name="Zhang H."/>
            <person name="Wu F."/>
            <person name="Wang X."/>
            <person name="Du H."/>
            <person name="Wang X."/>
            <person name="Zhang H."/>
        </authorList>
    </citation>
    <scope>FUNCTION</scope>
    <scope>SUBUNIT</scope>
    <scope>INTERACTION WITH ATG-5 AND ATG-16.1</scope>
    <scope>SUBCELLULAR LOCATION</scope>
    <scope>TISSUE SPECIFICITY</scope>
    <scope>DEVELOPMENTAL STAGE</scope>
    <scope>MUTAGENESIS OF HIS-331 AND 533-TRP-ARG-534</scope>
</reference>
<reference key="3">
    <citation type="journal article" date="2015" name="Mol. Cell">
        <title>Structural Basis of the Differential Function of the Two C. elegans Atg8 Homologs, LGG-1 and LGG-2, in Autophagy.</title>
        <authorList>
            <person name="Wu F."/>
            <person name="Watanabe Y."/>
            <person name="Guo X.Y."/>
            <person name="Qi X."/>
            <person name="Wang P."/>
            <person name="Zhao H.Y."/>
            <person name="Wang Z."/>
            <person name="Fujioka Y."/>
            <person name="Zhang H."/>
            <person name="Ren J.Q."/>
            <person name="Fang T.C."/>
            <person name="Shen Y.X."/>
            <person name="Feng W."/>
            <person name="Hu J.J."/>
            <person name="Noda N.N."/>
            <person name="Zhang H."/>
        </authorList>
    </citation>
    <scope>FUNCTION</scope>
    <scope>INTERACTION WITH LGG-2</scope>
</reference>
<reference key="4">
    <citation type="journal article" date="2017" name="Curr. Biol.">
        <title>A Non-Cell-Autonomous Role of BEC-1/BECN1/Beclin1 in Coordinating Cell-Cycle Progression and Stem Cell Proliferation during Germline Development.</title>
        <authorList>
            <person name="Ames K."/>
            <person name="Da Cunha D.S."/>
            <person name="Gonzalez B."/>
            <person name="Konta M."/>
            <person name="Lin F."/>
            <person name="Shechter G."/>
            <person name="Starikov L."/>
            <person name="Wong S."/>
            <person name="Buelow H.E."/>
            <person name="Melendez A."/>
        </authorList>
    </citation>
    <scope>FUNCTION</scope>
</reference>
<keyword id="KW-0072">Autophagy</keyword>
<keyword id="KW-1003">Cell membrane</keyword>
<keyword id="KW-0963">Cytoplasm</keyword>
<keyword id="KW-0472">Membrane</keyword>
<keyword id="KW-1185">Reference proteome</keyword>
<keyword id="KW-0677">Repeat</keyword>
<keyword id="KW-0853">WD repeat</keyword>
<evidence type="ECO:0000269" key="1">
    <source>
    </source>
</evidence>
<evidence type="ECO:0000269" key="2">
    <source>
    </source>
</evidence>
<evidence type="ECO:0000269" key="3">
    <source>
    </source>
</evidence>
<evidence type="ECO:0000305" key="4"/>
<evidence type="ECO:0000305" key="5">
    <source>
    </source>
</evidence>
<evidence type="ECO:0000312" key="6">
    <source>
        <dbReference type="WormBase" id="K06A1.5"/>
    </source>
</evidence>
<feature type="chain" id="PRO_0000051509" description="Autophagic-related protein 16.2">
    <location>
        <begin position="1"/>
        <end position="534"/>
    </location>
</feature>
<feature type="repeat" description="WD 1">
    <location>
        <begin position="243"/>
        <end position="281"/>
    </location>
</feature>
<feature type="repeat" description="WD 2">
    <location>
        <begin position="288"/>
        <end position="329"/>
    </location>
</feature>
<feature type="repeat" description="WD 3">
    <location>
        <begin position="330"/>
        <end position="368"/>
    </location>
</feature>
<feature type="repeat" description="WD 4">
    <location>
        <begin position="371"/>
        <end position="411"/>
    </location>
</feature>
<feature type="repeat" description="WD 5">
    <location>
        <begin position="413"/>
        <end position="452"/>
    </location>
</feature>
<feature type="repeat" description="WD 6">
    <location>
        <begin position="459"/>
        <end position="498"/>
    </location>
</feature>
<feature type="repeat" description="WD 7">
    <location>
        <begin position="504"/>
        <end position="534"/>
    </location>
</feature>
<feature type="mutagenesis site" description="Does not impair function (unlike the corresponding mutation in atg-16.1, which causes defects in autophagy)." evidence="1">
    <original>H</original>
    <variation>Y</variation>
    <location>
        <position position="331"/>
    </location>
</feature>
<feature type="mutagenesis site" description="In bp636; results in defective degradation of sqst-1." evidence="1">
    <location>
        <begin position="533"/>
        <end position="534"/>
    </location>
</feature>
<name>A16L2_CAEEL</name>
<dbReference type="EMBL" id="BX284602">
    <property type="protein sequence ID" value="CCD72613.1"/>
    <property type="molecule type" value="Genomic_DNA"/>
</dbReference>
<dbReference type="PIR" id="T34332">
    <property type="entry name" value="T34332"/>
</dbReference>
<dbReference type="RefSeq" id="NP_495299.2">
    <property type="nucleotide sequence ID" value="NM_062898.4"/>
</dbReference>
<dbReference type="SMR" id="Q09406"/>
<dbReference type="BioGRID" id="39406">
    <property type="interactions" value="12"/>
</dbReference>
<dbReference type="ComplexPortal" id="CPX-3863">
    <property type="entry name" value="atg-5-atg-12-atg-16.1-atg-16.2 complex"/>
</dbReference>
<dbReference type="ComplexPortal" id="CPX-3866">
    <property type="entry name" value="atg-5-atg-12-atg-16.2 complex"/>
</dbReference>
<dbReference type="DIP" id="DIP-27464N"/>
<dbReference type="FunCoup" id="Q09406">
    <property type="interactions" value="3207"/>
</dbReference>
<dbReference type="STRING" id="6239.K06A1.5.1"/>
<dbReference type="PaxDb" id="6239-K06A1.5"/>
<dbReference type="PeptideAtlas" id="Q09406"/>
<dbReference type="EnsemblMetazoa" id="K06A1.5.1">
    <property type="protein sequence ID" value="K06A1.5.1"/>
    <property type="gene ID" value="WBGene00019427"/>
</dbReference>
<dbReference type="GeneID" id="174067"/>
<dbReference type="KEGG" id="cel:CELE_K06A1.5"/>
<dbReference type="AGR" id="WB:WBGene00019427"/>
<dbReference type="CTD" id="174067"/>
<dbReference type="WormBase" id="K06A1.5">
    <property type="protein sequence ID" value="CE39948"/>
    <property type="gene ID" value="WBGene00019427"/>
    <property type="gene designation" value="atg-16.2"/>
</dbReference>
<dbReference type="eggNOG" id="KOG0288">
    <property type="taxonomic scope" value="Eukaryota"/>
</dbReference>
<dbReference type="GeneTree" id="ENSGT00940000153936"/>
<dbReference type="HOGENOM" id="CLU_000288_57_10_1"/>
<dbReference type="InParanoid" id="Q09406"/>
<dbReference type="OMA" id="IIHLYSA"/>
<dbReference type="OrthoDB" id="6262491at2759"/>
<dbReference type="PhylomeDB" id="Q09406"/>
<dbReference type="Reactome" id="R-CEL-1632852">
    <property type="pathway name" value="Macroautophagy"/>
</dbReference>
<dbReference type="PRO" id="PR:Q09406"/>
<dbReference type="Proteomes" id="UP000001940">
    <property type="component" value="Chromosome II"/>
</dbReference>
<dbReference type="Bgee" id="WBGene00019427">
    <property type="expression patterns" value="Expressed in embryo and 4 other cell types or tissues"/>
</dbReference>
<dbReference type="GO" id="GO:0034274">
    <property type="term" value="C:Atg12-Atg5-Atg16 complex"/>
    <property type="evidence" value="ECO:0000318"/>
    <property type="project" value="GO_Central"/>
</dbReference>
<dbReference type="GO" id="GO:0000421">
    <property type="term" value="C:autophagosome membrane"/>
    <property type="evidence" value="ECO:0000318"/>
    <property type="project" value="GO_Central"/>
</dbReference>
<dbReference type="GO" id="GO:0005737">
    <property type="term" value="C:cytoplasm"/>
    <property type="evidence" value="ECO:0000314"/>
    <property type="project" value="WormBase"/>
</dbReference>
<dbReference type="GO" id="GO:0034045">
    <property type="term" value="C:phagophore assembly site membrane"/>
    <property type="evidence" value="ECO:0000318"/>
    <property type="project" value="GO_Central"/>
</dbReference>
<dbReference type="GO" id="GO:0005886">
    <property type="term" value="C:plasma membrane"/>
    <property type="evidence" value="ECO:0007669"/>
    <property type="project" value="UniProtKB-SubCell"/>
</dbReference>
<dbReference type="GO" id="GO:0043495">
    <property type="term" value="F:protein-membrane adaptor activity"/>
    <property type="evidence" value="ECO:0000318"/>
    <property type="project" value="GO_Central"/>
</dbReference>
<dbReference type="GO" id="GO:0035973">
    <property type="term" value="P:aggrephagy"/>
    <property type="evidence" value="ECO:0000315"/>
    <property type="project" value="WormBase"/>
</dbReference>
<dbReference type="GO" id="GO:0000045">
    <property type="term" value="P:autophagosome assembly"/>
    <property type="evidence" value="ECO:0000315"/>
    <property type="project" value="UniProtKB"/>
</dbReference>
<dbReference type="GO" id="GO:0006914">
    <property type="term" value="P:autophagy"/>
    <property type="evidence" value="ECO:0000303"/>
    <property type="project" value="ComplexPortal"/>
</dbReference>
<dbReference type="GO" id="GO:0050830">
    <property type="term" value="P:defense response to Gram-positive bacterium"/>
    <property type="evidence" value="ECO:0000270"/>
    <property type="project" value="WormBase"/>
</dbReference>
<dbReference type="GO" id="GO:0036093">
    <property type="term" value="P:germ cell proliferation"/>
    <property type="evidence" value="ECO:0000315"/>
    <property type="project" value="UniProtKB"/>
</dbReference>
<dbReference type="GO" id="GO:0042078">
    <property type="term" value="P:germ-line stem cell division"/>
    <property type="evidence" value="ECO:0000315"/>
    <property type="project" value="UniProtKB"/>
</dbReference>
<dbReference type="GO" id="GO:0016236">
    <property type="term" value="P:macroautophagy"/>
    <property type="evidence" value="ECO:0000303"/>
    <property type="project" value="ComplexPortal"/>
</dbReference>
<dbReference type="CDD" id="cd00200">
    <property type="entry name" value="WD40"/>
    <property type="match status" value="1"/>
</dbReference>
<dbReference type="FunFam" id="2.130.10.10:FF:002020">
    <property type="entry name" value="Autophagic-related protein 16.1"/>
    <property type="match status" value="1"/>
</dbReference>
<dbReference type="FunFam" id="2.130.10.10:FF:000515">
    <property type="entry name" value="Autophagy-related 16, isoform C"/>
    <property type="match status" value="1"/>
</dbReference>
<dbReference type="Gene3D" id="2.130.10.10">
    <property type="entry name" value="YVTN repeat-like/Quinoprotein amine dehydrogenase"/>
    <property type="match status" value="2"/>
</dbReference>
<dbReference type="InterPro" id="IPR045160">
    <property type="entry name" value="ATG16"/>
</dbReference>
<dbReference type="InterPro" id="IPR020472">
    <property type="entry name" value="G-protein_beta_WD-40_rep"/>
</dbReference>
<dbReference type="InterPro" id="IPR015943">
    <property type="entry name" value="WD40/YVTN_repeat-like_dom_sf"/>
</dbReference>
<dbReference type="InterPro" id="IPR019775">
    <property type="entry name" value="WD40_repeat_CS"/>
</dbReference>
<dbReference type="InterPro" id="IPR036322">
    <property type="entry name" value="WD40_repeat_dom_sf"/>
</dbReference>
<dbReference type="InterPro" id="IPR001680">
    <property type="entry name" value="WD40_rpt"/>
</dbReference>
<dbReference type="PANTHER" id="PTHR19878:SF14">
    <property type="entry name" value="AUTOPHAGIC-RELATED PROTEIN 16.2"/>
    <property type="match status" value="1"/>
</dbReference>
<dbReference type="PANTHER" id="PTHR19878">
    <property type="entry name" value="AUTOPHAGY PROTEIN 16-LIKE"/>
    <property type="match status" value="1"/>
</dbReference>
<dbReference type="Pfam" id="PF00400">
    <property type="entry name" value="WD40"/>
    <property type="match status" value="5"/>
</dbReference>
<dbReference type="PRINTS" id="PR00320">
    <property type="entry name" value="GPROTEINBRPT"/>
</dbReference>
<dbReference type="SMART" id="SM00320">
    <property type="entry name" value="WD40"/>
    <property type="match status" value="7"/>
</dbReference>
<dbReference type="SUPFAM" id="SSF50978">
    <property type="entry name" value="WD40 repeat-like"/>
    <property type="match status" value="1"/>
</dbReference>
<dbReference type="PROSITE" id="PS00678">
    <property type="entry name" value="WD_REPEATS_1"/>
    <property type="match status" value="2"/>
</dbReference>
<dbReference type="PROSITE" id="PS50082">
    <property type="entry name" value="WD_REPEATS_2"/>
    <property type="match status" value="5"/>
</dbReference>
<dbReference type="PROSITE" id="PS50294">
    <property type="entry name" value="WD_REPEATS_REGION"/>
    <property type="match status" value="1"/>
</dbReference>
<accession>Q09406</accession>
<gene>
    <name evidence="6" type="primary">atg-16.2</name>
    <name evidence="6" type="ORF">K06A1.5</name>
</gene>
<comment type="function">
    <text evidence="1 2 3">Most likely a component of the atg-5-atg-12-atg-16.1/atg-16.2 complex, which is recruited to the preautophagosomal membrane and associates with lgg-2 to promote autophagosome formation (PubMed:24185444, PubMed:26687600). Plays a role in the recruitment of lipidated lgg-1 probably to the autophagosome membrane to promote autophagosome formation (PubMed:24185444). Furthermore, association with atg-5 is required for the nucleation of lgg-1 positive autophagosomes (PubMed:24185444). Although its role in autophagosome formation may be distinct to the role of atg-16.2, it functions in a partially redundant manner with atg-16.1 to regulate autophagic processes (PubMed:24185444, PubMed:28285998). In a daf-18/PTEN- and daf-16/FOXO-dependent manner, required for maintaining the numbers of germ stem cell progenitors in the gonad during the late phases of larval development (PubMed:28285998).</text>
</comment>
<comment type="subunit">
    <text evidence="1 2 5">Homodimer (via N-terminus) (PubMed:24185444). Most likely a component of a complex at least containing atg-5, lgg-3, atg-16.1 and/or atg-16.2 (Probable). Interacts (via N-terminus) with atg-16.1 (via N-terminus) (PubMed:24185444). Interacts (via N-terminus) with atg-5 (PubMed:24185444). Interacts (via WD 5-6 repeats) with lgg-2; the interaction is direct (PubMed:26687600).</text>
</comment>
<comment type="subcellular location">
    <subcellularLocation>
        <location evidence="1">Cytoplasm</location>
    </subcellularLocation>
    <subcellularLocation>
        <location evidence="1">Cell membrane</location>
    </subcellularLocation>
</comment>
<comment type="tissue specificity">
    <text evidence="1">Expressed in neurons, pharyngeal muscles, body wall muscle cells and intestinal cells.</text>
</comment>
<comment type="developmental stage">
    <text evidence="5">Expressed throughout development.</text>
</comment>
<comment type="similarity">
    <text evidence="4">Belongs to the WD repeat tipD family.</text>
</comment>
<organism>
    <name type="scientific">Caenorhabditis elegans</name>
    <dbReference type="NCBI Taxonomy" id="6239"/>
    <lineage>
        <taxon>Eukaryota</taxon>
        <taxon>Metazoa</taxon>
        <taxon>Ecdysozoa</taxon>
        <taxon>Nematoda</taxon>
        <taxon>Chromadorea</taxon>
        <taxon>Rhabditida</taxon>
        <taxon>Rhabditina</taxon>
        <taxon>Rhabditomorpha</taxon>
        <taxon>Rhabditoidea</taxon>
        <taxon>Rhabditidae</taxon>
        <taxon>Peloderinae</taxon>
        <taxon>Caenorhabditis</taxon>
    </lineage>
</organism>
<proteinExistence type="evidence at protein level"/>
<protein>
    <recommendedName>
        <fullName>Autophagic-related protein 16.2</fullName>
    </recommendedName>
</protein>
<sequence length="534" mass="60496">MTDNRTSFRLEILNRLCKRERQQRCVKDMFKNYSLLDEQLQQSHRSRSVSVNDEHFKGNVNDRLAVMKEEMANVYRMKSKNDQDLIDANRKLADSESRYSLVSSQRDKLRIETDAIVKKMTVLENELAELKEENSVINTERVSLVATCNYLTEKKTQLDNERFQLLNRIRELQEKSAEFMNAEIALQEERAQMRIREQIAKATADLNLGDERASSAFGTSPETLDEFMMTDVLPSEVKFKLSTHDGEVHDVEWMSDDTFATAGSDSKVQIWRVSPNKTDASKVSTLSGCLGPVNRLDYDSQRHVCLASSNDKTCRLWNIDSQRLLSTFSGHTDKVSSARLFQSHNVISGSADRTIKNWDISSIRCLKSYLVGSTVFDIVAKCGVSQSSFISSHFDKKVRFWDARSSDATYSVELGQKVSSLDISMDGLQVLASSRDDTLSLIDVRNYGIIHLYSAEQYKTSCDSTRAIFSSTGEYVLAGSSNSSVFIWNTKTTKLEKVVKTARSDSAQIMSLAWNPSGRGLLACDRQKTCTLWR</sequence>